<protein>
    <recommendedName>
        <fullName evidence="1">Formate--tetrahydrofolate ligase</fullName>
        <ecNumber evidence="1">6.3.4.3</ecNumber>
    </recommendedName>
    <alternativeName>
        <fullName evidence="1">Formyltetrahydrofolate synthetase</fullName>
        <shortName evidence="1">FHS</shortName>
        <shortName evidence="1">FTHFS</shortName>
    </alternativeName>
</protein>
<name>FTHS_LACDB</name>
<gene>
    <name evidence="1" type="primary">fhs</name>
    <name type="ordered locus">LBUL_0928</name>
</gene>
<organism>
    <name type="scientific">Lactobacillus delbrueckii subsp. bulgaricus (strain ATCC BAA-365 / Lb-18)</name>
    <dbReference type="NCBI Taxonomy" id="321956"/>
    <lineage>
        <taxon>Bacteria</taxon>
        <taxon>Bacillati</taxon>
        <taxon>Bacillota</taxon>
        <taxon>Bacilli</taxon>
        <taxon>Lactobacillales</taxon>
        <taxon>Lactobacillaceae</taxon>
        <taxon>Lactobacillus</taxon>
    </lineage>
</organism>
<accession>Q04AM0</accession>
<keyword id="KW-0067">ATP-binding</keyword>
<keyword id="KW-0436">Ligase</keyword>
<keyword id="KW-0547">Nucleotide-binding</keyword>
<keyword id="KW-0554">One-carbon metabolism</keyword>
<reference key="1">
    <citation type="journal article" date="2006" name="Proc. Natl. Acad. Sci. U.S.A.">
        <title>Comparative genomics of the lactic acid bacteria.</title>
        <authorList>
            <person name="Makarova K.S."/>
            <person name="Slesarev A."/>
            <person name="Wolf Y.I."/>
            <person name="Sorokin A."/>
            <person name="Mirkin B."/>
            <person name="Koonin E.V."/>
            <person name="Pavlov A."/>
            <person name="Pavlova N."/>
            <person name="Karamychev V."/>
            <person name="Polouchine N."/>
            <person name="Shakhova V."/>
            <person name="Grigoriev I."/>
            <person name="Lou Y."/>
            <person name="Rohksar D."/>
            <person name="Lucas S."/>
            <person name="Huang K."/>
            <person name="Goodstein D.M."/>
            <person name="Hawkins T."/>
            <person name="Plengvidhya V."/>
            <person name="Welker D."/>
            <person name="Hughes J."/>
            <person name="Goh Y."/>
            <person name="Benson A."/>
            <person name="Baldwin K."/>
            <person name="Lee J.-H."/>
            <person name="Diaz-Muniz I."/>
            <person name="Dosti B."/>
            <person name="Smeianov V."/>
            <person name="Wechter W."/>
            <person name="Barabote R."/>
            <person name="Lorca G."/>
            <person name="Altermann E."/>
            <person name="Barrangou R."/>
            <person name="Ganesan B."/>
            <person name="Xie Y."/>
            <person name="Rawsthorne H."/>
            <person name="Tamir D."/>
            <person name="Parker C."/>
            <person name="Breidt F."/>
            <person name="Broadbent J.R."/>
            <person name="Hutkins R."/>
            <person name="O'Sullivan D."/>
            <person name="Steele J."/>
            <person name="Unlu G."/>
            <person name="Saier M.H. Jr."/>
            <person name="Klaenhammer T."/>
            <person name="Richardson P."/>
            <person name="Kozyavkin S."/>
            <person name="Weimer B.C."/>
            <person name="Mills D.A."/>
        </authorList>
    </citation>
    <scope>NUCLEOTIDE SEQUENCE [LARGE SCALE GENOMIC DNA]</scope>
    <source>
        <strain>ATCC BAA-365 / Lb-18</strain>
    </source>
</reference>
<evidence type="ECO:0000255" key="1">
    <source>
        <dbReference type="HAMAP-Rule" id="MF_01543"/>
    </source>
</evidence>
<feature type="chain" id="PRO_0000293040" description="Formate--tetrahydrofolate ligase">
    <location>
        <begin position="1"/>
        <end position="559"/>
    </location>
</feature>
<feature type="binding site" evidence="1">
    <location>
        <begin position="67"/>
        <end position="74"/>
    </location>
    <ligand>
        <name>ATP</name>
        <dbReference type="ChEBI" id="CHEBI:30616"/>
    </ligand>
</feature>
<comment type="catalytic activity">
    <reaction evidence="1">
        <text>(6S)-5,6,7,8-tetrahydrofolate + formate + ATP = (6R)-10-formyltetrahydrofolate + ADP + phosphate</text>
        <dbReference type="Rhea" id="RHEA:20221"/>
        <dbReference type="ChEBI" id="CHEBI:15740"/>
        <dbReference type="ChEBI" id="CHEBI:30616"/>
        <dbReference type="ChEBI" id="CHEBI:43474"/>
        <dbReference type="ChEBI" id="CHEBI:57453"/>
        <dbReference type="ChEBI" id="CHEBI:195366"/>
        <dbReference type="ChEBI" id="CHEBI:456216"/>
        <dbReference type="EC" id="6.3.4.3"/>
    </reaction>
</comment>
<comment type="pathway">
    <text evidence="1">One-carbon metabolism; tetrahydrofolate interconversion.</text>
</comment>
<comment type="similarity">
    <text evidence="1">Belongs to the formate--tetrahydrofolate ligase family.</text>
</comment>
<proteinExistence type="inferred from homology"/>
<sequence length="559" mass="60521">MVKSDIEIAQAAEELPITDVAAKLGLTSQDLEPYGYDKAKVNWQAIKRSEENGHLGKMILVTSISPTPAGEGKSTMTIGIGDAINNQLGKKTVIALREPSMGPVFGMKGGAAGGGYAQVIPMEDINLHFTGDMHALTSAIDNLSALVDNYIYQGNELGLDPEKIVIKRGLDVNDRTLRKVTIGQGSKFNGVERPASFQLTVGHELMAILCLSKDIADLKERIGKVLVGYTYEDEPVFVKDLGFQGAIAALLSTALKPNLVQTLEHTPAFVHGGPFANIAHGNNSILSTNLALHLSDYVLSEAGFGSDLGGQKFLDFVSTKLEKKPDAAVVVATVRALKYQAEKSTDHLKEENLDSLKEGFANLDRHMNNVRSYNIPVLVVINKFPTDTEAELDLLKSLIEEQGFPCEIVTAHDEGSKGAKAAAEKIVELADKSDYEIKRSYDLDDDLETKIEKVAKRIYHAADVEYTDKAKDQLVKLKKMGKDKLPVIIAKTQYSFTDNVKELGAPTGFTLHVKGLSLRNGAGFVVVSTGHILDMPGLPKHPAALDIDVDETGKISGLF</sequence>
<dbReference type="EC" id="6.3.4.3" evidence="1"/>
<dbReference type="EMBL" id="CP000412">
    <property type="protein sequence ID" value="ABJ58502.1"/>
    <property type="molecule type" value="Genomic_DNA"/>
</dbReference>
<dbReference type="RefSeq" id="WP_011678238.1">
    <property type="nucleotide sequence ID" value="NC_008529.1"/>
</dbReference>
<dbReference type="SMR" id="Q04AM0"/>
<dbReference type="KEGG" id="lbu:LBUL_0928"/>
<dbReference type="HOGENOM" id="CLU_003601_3_3_9"/>
<dbReference type="BioCyc" id="LDEL321956:LBUL_RS04425-MONOMER"/>
<dbReference type="UniPathway" id="UPA00193"/>
<dbReference type="GO" id="GO:0005524">
    <property type="term" value="F:ATP binding"/>
    <property type="evidence" value="ECO:0007669"/>
    <property type="project" value="UniProtKB-UniRule"/>
</dbReference>
<dbReference type="GO" id="GO:0004329">
    <property type="term" value="F:formate-tetrahydrofolate ligase activity"/>
    <property type="evidence" value="ECO:0007669"/>
    <property type="project" value="UniProtKB-UniRule"/>
</dbReference>
<dbReference type="GO" id="GO:0035999">
    <property type="term" value="P:tetrahydrofolate interconversion"/>
    <property type="evidence" value="ECO:0007669"/>
    <property type="project" value="UniProtKB-UniRule"/>
</dbReference>
<dbReference type="CDD" id="cd00477">
    <property type="entry name" value="FTHFS"/>
    <property type="match status" value="1"/>
</dbReference>
<dbReference type="FunFam" id="3.30.1510.10:FF:000001">
    <property type="entry name" value="Formate--tetrahydrofolate ligase"/>
    <property type="match status" value="1"/>
</dbReference>
<dbReference type="Gene3D" id="3.30.1510.10">
    <property type="entry name" value="Domain 2, N(10)-formyltetrahydrofolate synthetase"/>
    <property type="match status" value="1"/>
</dbReference>
<dbReference type="Gene3D" id="3.10.410.10">
    <property type="entry name" value="Formyltetrahydrofolate synthetase, domain 3"/>
    <property type="match status" value="1"/>
</dbReference>
<dbReference type="Gene3D" id="3.40.50.300">
    <property type="entry name" value="P-loop containing nucleotide triphosphate hydrolases"/>
    <property type="match status" value="1"/>
</dbReference>
<dbReference type="HAMAP" id="MF_01543">
    <property type="entry name" value="FTHFS"/>
    <property type="match status" value="1"/>
</dbReference>
<dbReference type="InterPro" id="IPR000559">
    <property type="entry name" value="Formate_THF_ligase"/>
</dbReference>
<dbReference type="InterPro" id="IPR020628">
    <property type="entry name" value="Formate_THF_ligase_CS"/>
</dbReference>
<dbReference type="InterPro" id="IPR027417">
    <property type="entry name" value="P-loop_NTPase"/>
</dbReference>
<dbReference type="NCBIfam" id="NF010030">
    <property type="entry name" value="PRK13505.1"/>
    <property type="match status" value="1"/>
</dbReference>
<dbReference type="Pfam" id="PF01268">
    <property type="entry name" value="FTHFS"/>
    <property type="match status" value="1"/>
</dbReference>
<dbReference type="SUPFAM" id="SSF52540">
    <property type="entry name" value="P-loop containing nucleoside triphosphate hydrolases"/>
    <property type="match status" value="1"/>
</dbReference>
<dbReference type="PROSITE" id="PS00721">
    <property type="entry name" value="FTHFS_1"/>
    <property type="match status" value="1"/>
</dbReference>